<keyword id="KW-0007">Acetylation</keyword>
<keyword id="KW-0028">Amino-acid biosynthesis</keyword>
<keyword id="KW-0032">Aminotransferase</keyword>
<keyword id="KW-0055">Arginine biosynthesis</keyword>
<keyword id="KW-0963">Cytoplasm</keyword>
<keyword id="KW-0663">Pyridoxal phosphate</keyword>
<keyword id="KW-1185">Reference proteome</keyword>
<keyword id="KW-0808">Transferase</keyword>
<sequence length="400" mass="40910">MTGASTTTATMRQRWQAVMMNNYGTPPIALASGDGAVVTDVDGRTYIDLLGGIAVNVLGHRHPAVIEAVTRQMSTLGHTSNLYATEPGIALAEELVALLGADQRTRVFFCNSGAEANEAAFKLSRLTGRTKLVAAHDAFHGRTMGSLALTGQPAKQTPFAPLPGDVTHVGYGDVDALAAAVDDHTAAVFLEPIMGESGVVVPPAGYLAAARDITARRGALLVLDEVQTGMGRTGAFFAHQHDGITPDVVTLAKGLGGGLPIGACLAVGPAAELLTPGLHGSTFGGNPVCAAAALAVLRVLASDGLVRRAEVLGKSLRHGIEALGHPLIDHVRGRGLLLGIALTAPHAKDAEATARDAGYLVNAAAPDVIRLAPPLIIAEAQLDGFVAALPAILDRAVGAP</sequence>
<dbReference type="EC" id="2.6.1.11" evidence="2"/>
<dbReference type="EMBL" id="AE000516">
    <property type="protein sequence ID" value="AAK45962.1"/>
    <property type="molecule type" value="Genomic_DNA"/>
</dbReference>
<dbReference type="PIR" id="B70621">
    <property type="entry name" value="B70621"/>
</dbReference>
<dbReference type="RefSeq" id="WP_003408163.1">
    <property type="nucleotide sequence ID" value="NZ_KK341227.1"/>
</dbReference>
<dbReference type="SMR" id="P9WPZ6"/>
<dbReference type="KEGG" id="mtc:MT1693"/>
<dbReference type="PATRIC" id="fig|83331.31.peg.1820"/>
<dbReference type="HOGENOM" id="CLU_016922_10_1_11"/>
<dbReference type="UniPathway" id="UPA00068">
    <property type="reaction ID" value="UER00109"/>
</dbReference>
<dbReference type="Proteomes" id="UP000001020">
    <property type="component" value="Chromosome"/>
</dbReference>
<dbReference type="GO" id="GO:0005737">
    <property type="term" value="C:cytoplasm"/>
    <property type="evidence" value="ECO:0007669"/>
    <property type="project" value="UniProtKB-SubCell"/>
</dbReference>
<dbReference type="GO" id="GO:0042802">
    <property type="term" value="F:identical protein binding"/>
    <property type="evidence" value="ECO:0007669"/>
    <property type="project" value="TreeGrafter"/>
</dbReference>
<dbReference type="GO" id="GO:0003992">
    <property type="term" value="F:N2-acetyl-L-ornithine:2-oxoglutarate 5-aminotransferase activity"/>
    <property type="evidence" value="ECO:0007669"/>
    <property type="project" value="UniProtKB-UniRule"/>
</dbReference>
<dbReference type="GO" id="GO:0030170">
    <property type="term" value="F:pyridoxal phosphate binding"/>
    <property type="evidence" value="ECO:0007669"/>
    <property type="project" value="InterPro"/>
</dbReference>
<dbReference type="GO" id="GO:0006526">
    <property type="term" value="P:L-arginine biosynthetic process"/>
    <property type="evidence" value="ECO:0007669"/>
    <property type="project" value="UniProtKB-UniRule"/>
</dbReference>
<dbReference type="CDD" id="cd00610">
    <property type="entry name" value="OAT_like"/>
    <property type="match status" value="1"/>
</dbReference>
<dbReference type="FunFam" id="3.40.640.10:FF:000004">
    <property type="entry name" value="Acetylornithine aminotransferase"/>
    <property type="match status" value="1"/>
</dbReference>
<dbReference type="Gene3D" id="3.90.1150.10">
    <property type="entry name" value="Aspartate Aminotransferase, domain 1"/>
    <property type="match status" value="1"/>
</dbReference>
<dbReference type="Gene3D" id="3.40.640.10">
    <property type="entry name" value="Type I PLP-dependent aspartate aminotransferase-like (Major domain)"/>
    <property type="match status" value="1"/>
</dbReference>
<dbReference type="HAMAP" id="MF_01107">
    <property type="entry name" value="ArgD_aminotrans_3"/>
    <property type="match status" value="1"/>
</dbReference>
<dbReference type="InterPro" id="IPR004636">
    <property type="entry name" value="AcOrn/SuccOrn_fam"/>
</dbReference>
<dbReference type="InterPro" id="IPR005814">
    <property type="entry name" value="Aminotrans_3"/>
</dbReference>
<dbReference type="InterPro" id="IPR049704">
    <property type="entry name" value="Aminotrans_3_PPA_site"/>
</dbReference>
<dbReference type="InterPro" id="IPR050103">
    <property type="entry name" value="Class-III_PLP-dep_AT"/>
</dbReference>
<dbReference type="InterPro" id="IPR015424">
    <property type="entry name" value="PyrdxlP-dep_Trfase"/>
</dbReference>
<dbReference type="InterPro" id="IPR015421">
    <property type="entry name" value="PyrdxlP-dep_Trfase_major"/>
</dbReference>
<dbReference type="InterPro" id="IPR015422">
    <property type="entry name" value="PyrdxlP-dep_Trfase_small"/>
</dbReference>
<dbReference type="NCBIfam" id="TIGR00707">
    <property type="entry name" value="argD"/>
    <property type="match status" value="1"/>
</dbReference>
<dbReference type="NCBIfam" id="NF002874">
    <property type="entry name" value="PRK03244.1"/>
    <property type="match status" value="1"/>
</dbReference>
<dbReference type="PANTHER" id="PTHR11986:SF79">
    <property type="entry name" value="ACETYLORNITHINE AMINOTRANSFERASE, MITOCHONDRIAL"/>
    <property type="match status" value="1"/>
</dbReference>
<dbReference type="PANTHER" id="PTHR11986">
    <property type="entry name" value="AMINOTRANSFERASE CLASS III"/>
    <property type="match status" value="1"/>
</dbReference>
<dbReference type="Pfam" id="PF00202">
    <property type="entry name" value="Aminotran_3"/>
    <property type="match status" value="1"/>
</dbReference>
<dbReference type="PIRSF" id="PIRSF000521">
    <property type="entry name" value="Transaminase_4ab_Lys_Orn"/>
    <property type="match status" value="1"/>
</dbReference>
<dbReference type="SUPFAM" id="SSF53383">
    <property type="entry name" value="PLP-dependent transferases"/>
    <property type="match status" value="1"/>
</dbReference>
<dbReference type="PROSITE" id="PS00600">
    <property type="entry name" value="AA_TRANSFER_CLASS_3"/>
    <property type="match status" value="1"/>
</dbReference>
<accession>P9WPZ6</accession>
<accession>L0T8W6</accession>
<accession>P63568</accession>
<accession>P94990</accession>
<protein>
    <recommendedName>
        <fullName evidence="2">Acetylornithine aminotransferase</fullName>
        <shortName evidence="2">ACOAT</shortName>
        <ecNumber evidence="2">2.6.1.11</ecNumber>
    </recommendedName>
</protein>
<comment type="catalytic activity">
    <reaction evidence="2">
        <text>N(2)-acetyl-L-ornithine + 2-oxoglutarate = N-acetyl-L-glutamate 5-semialdehyde + L-glutamate</text>
        <dbReference type="Rhea" id="RHEA:18049"/>
        <dbReference type="ChEBI" id="CHEBI:16810"/>
        <dbReference type="ChEBI" id="CHEBI:29123"/>
        <dbReference type="ChEBI" id="CHEBI:29985"/>
        <dbReference type="ChEBI" id="CHEBI:57805"/>
        <dbReference type="EC" id="2.6.1.11"/>
    </reaction>
</comment>
<comment type="cofactor">
    <cofactor evidence="2">
        <name>pyridoxal 5'-phosphate</name>
        <dbReference type="ChEBI" id="CHEBI:597326"/>
    </cofactor>
    <text evidence="2">Binds 1 pyridoxal phosphate per subunit.</text>
</comment>
<comment type="pathway">
    <text evidence="2">Amino-acid biosynthesis; L-arginine biosynthesis; N(2)-acetyl-L-ornithine from L-glutamate: step 4/4.</text>
</comment>
<comment type="subunit">
    <text evidence="2">Homodimer.</text>
</comment>
<comment type="subcellular location">
    <subcellularLocation>
        <location evidence="2">Cytoplasm</location>
    </subcellularLocation>
</comment>
<comment type="miscellaneous">
    <text evidence="2">May also have succinyldiaminopimelate aminotransferase activity, thus carrying out the corresponding step in lysine biosynthesis.</text>
</comment>
<comment type="similarity">
    <text evidence="2">Belongs to the class-III pyridoxal-phosphate-dependent aminotransferase family. ArgD subfamily.</text>
</comment>
<gene>
    <name evidence="2" type="primary">argD</name>
    <name type="ordered locus">MT1693</name>
</gene>
<organism>
    <name type="scientific">Mycobacterium tuberculosis (strain CDC 1551 / Oshkosh)</name>
    <dbReference type="NCBI Taxonomy" id="83331"/>
    <lineage>
        <taxon>Bacteria</taxon>
        <taxon>Bacillati</taxon>
        <taxon>Actinomycetota</taxon>
        <taxon>Actinomycetes</taxon>
        <taxon>Mycobacteriales</taxon>
        <taxon>Mycobacteriaceae</taxon>
        <taxon>Mycobacterium</taxon>
        <taxon>Mycobacterium tuberculosis complex</taxon>
    </lineage>
</organism>
<name>ARGD_MYCTO</name>
<reference key="1">
    <citation type="journal article" date="2002" name="J. Bacteriol.">
        <title>Whole-genome comparison of Mycobacterium tuberculosis clinical and laboratory strains.</title>
        <authorList>
            <person name="Fleischmann R.D."/>
            <person name="Alland D."/>
            <person name="Eisen J.A."/>
            <person name="Carpenter L."/>
            <person name="White O."/>
            <person name="Peterson J.D."/>
            <person name="DeBoy R.T."/>
            <person name="Dodson R.J."/>
            <person name="Gwinn M.L."/>
            <person name="Haft D.H."/>
            <person name="Hickey E.K."/>
            <person name="Kolonay J.F."/>
            <person name="Nelson W.C."/>
            <person name="Umayam L.A."/>
            <person name="Ermolaeva M.D."/>
            <person name="Salzberg S.L."/>
            <person name="Delcher A."/>
            <person name="Utterback T.R."/>
            <person name="Weidman J.F."/>
            <person name="Khouri H.M."/>
            <person name="Gill J."/>
            <person name="Mikula A."/>
            <person name="Bishai W."/>
            <person name="Jacobs W.R. Jr."/>
            <person name="Venter J.C."/>
            <person name="Fraser C.M."/>
        </authorList>
    </citation>
    <scope>NUCLEOTIDE SEQUENCE [LARGE SCALE GENOMIC DNA]</scope>
    <source>
        <strain>CDC 1551 / Oshkosh</strain>
    </source>
</reference>
<proteinExistence type="inferred from homology"/>
<feature type="initiator methionine" description="Removed" evidence="1">
    <location>
        <position position="1"/>
    </location>
</feature>
<feature type="chain" id="PRO_0000426864" description="Acetylornithine aminotransferase">
    <location>
        <begin position="2"/>
        <end position="400"/>
    </location>
</feature>
<feature type="binding site" evidence="2">
    <location>
        <begin position="113"/>
        <end position="114"/>
    </location>
    <ligand>
        <name>pyridoxal 5'-phosphate</name>
        <dbReference type="ChEBI" id="CHEBI:597326"/>
    </ligand>
</feature>
<feature type="binding site" evidence="2">
    <location>
        <position position="139"/>
    </location>
    <ligand>
        <name>pyridoxal 5'-phosphate</name>
        <dbReference type="ChEBI" id="CHEBI:597326"/>
    </ligand>
</feature>
<feature type="binding site" evidence="2">
    <location>
        <position position="142"/>
    </location>
    <ligand>
        <name>N(2)-acetyl-L-ornithine</name>
        <dbReference type="ChEBI" id="CHEBI:57805"/>
    </ligand>
</feature>
<feature type="binding site" evidence="2">
    <location>
        <begin position="224"/>
        <end position="227"/>
    </location>
    <ligand>
        <name>pyridoxal 5'-phosphate</name>
        <dbReference type="ChEBI" id="CHEBI:597326"/>
    </ligand>
</feature>
<feature type="binding site" evidence="2">
    <location>
        <position position="281"/>
    </location>
    <ligand>
        <name>N(2)-acetyl-L-ornithine</name>
        <dbReference type="ChEBI" id="CHEBI:57805"/>
    </ligand>
</feature>
<feature type="binding site" evidence="2">
    <location>
        <position position="282"/>
    </location>
    <ligand>
        <name>pyridoxal 5'-phosphate</name>
        <dbReference type="ChEBI" id="CHEBI:597326"/>
    </ligand>
</feature>
<feature type="modified residue" description="N-acetylthreonine; partial" evidence="1">
    <location>
        <position position="2"/>
    </location>
</feature>
<feature type="modified residue" description="N6-(pyridoxal phosphate)lysine" evidence="2">
    <location>
        <position position="253"/>
    </location>
</feature>
<evidence type="ECO:0000250" key="1"/>
<evidence type="ECO:0000255" key="2">
    <source>
        <dbReference type="HAMAP-Rule" id="MF_01107"/>
    </source>
</evidence>